<keyword id="KW-0408">Iron</keyword>
<keyword id="KW-0479">Metal-binding</keyword>
<feature type="chain" id="PRO_1000190057" description="Iron-sulfur cluster assembly protein CyaY">
    <location>
        <begin position="1"/>
        <end position="106"/>
    </location>
</feature>
<evidence type="ECO:0000255" key="1">
    <source>
        <dbReference type="HAMAP-Rule" id="MF_00142"/>
    </source>
</evidence>
<dbReference type="EMBL" id="CU928160">
    <property type="protein sequence ID" value="CAR00776.1"/>
    <property type="molecule type" value="Genomic_DNA"/>
</dbReference>
<dbReference type="RefSeq" id="WP_000999947.1">
    <property type="nucleotide sequence ID" value="NC_011741.1"/>
</dbReference>
<dbReference type="SMR" id="B7M605"/>
<dbReference type="GeneID" id="93778137"/>
<dbReference type="KEGG" id="ecr:ECIAI1_3994"/>
<dbReference type="HOGENOM" id="CLU_080880_3_0_6"/>
<dbReference type="GO" id="GO:0005829">
    <property type="term" value="C:cytosol"/>
    <property type="evidence" value="ECO:0007669"/>
    <property type="project" value="TreeGrafter"/>
</dbReference>
<dbReference type="GO" id="GO:0008199">
    <property type="term" value="F:ferric iron binding"/>
    <property type="evidence" value="ECO:0007669"/>
    <property type="project" value="InterPro"/>
</dbReference>
<dbReference type="GO" id="GO:0008198">
    <property type="term" value="F:ferrous iron binding"/>
    <property type="evidence" value="ECO:0007669"/>
    <property type="project" value="TreeGrafter"/>
</dbReference>
<dbReference type="GO" id="GO:0016226">
    <property type="term" value="P:iron-sulfur cluster assembly"/>
    <property type="evidence" value="ECO:0007669"/>
    <property type="project" value="UniProtKB-UniRule"/>
</dbReference>
<dbReference type="CDD" id="cd00503">
    <property type="entry name" value="Frataxin"/>
    <property type="match status" value="1"/>
</dbReference>
<dbReference type="FunFam" id="3.30.920.10:FF:000001">
    <property type="entry name" value="Iron-sulfur cluster assembly protein CyaY"/>
    <property type="match status" value="1"/>
</dbReference>
<dbReference type="Gene3D" id="3.30.920.10">
    <property type="entry name" value="Frataxin/CyaY"/>
    <property type="match status" value="1"/>
</dbReference>
<dbReference type="HAMAP" id="MF_00142">
    <property type="entry name" value="CyaY"/>
    <property type="match status" value="1"/>
</dbReference>
<dbReference type="InterPro" id="IPR047584">
    <property type="entry name" value="CyaY"/>
</dbReference>
<dbReference type="InterPro" id="IPR002908">
    <property type="entry name" value="Frataxin/CyaY"/>
</dbReference>
<dbReference type="InterPro" id="IPR036524">
    <property type="entry name" value="Frataxin/CyaY_sf"/>
</dbReference>
<dbReference type="InterPro" id="IPR020895">
    <property type="entry name" value="Frataxin_CS"/>
</dbReference>
<dbReference type="NCBIfam" id="TIGR03421">
    <property type="entry name" value="FeS_CyaY"/>
    <property type="match status" value="1"/>
</dbReference>
<dbReference type="PANTHER" id="PTHR16821">
    <property type="entry name" value="FRATAXIN"/>
    <property type="match status" value="1"/>
</dbReference>
<dbReference type="PANTHER" id="PTHR16821:SF2">
    <property type="entry name" value="FRATAXIN, MITOCHONDRIAL"/>
    <property type="match status" value="1"/>
</dbReference>
<dbReference type="Pfam" id="PF01491">
    <property type="entry name" value="Frataxin_Cyay"/>
    <property type="match status" value="1"/>
</dbReference>
<dbReference type="SMART" id="SM01219">
    <property type="entry name" value="Frataxin_Cyay"/>
    <property type="match status" value="1"/>
</dbReference>
<dbReference type="SUPFAM" id="SSF55387">
    <property type="entry name" value="Frataxin/Nqo15-like"/>
    <property type="match status" value="1"/>
</dbReference>
<dbReference type="PROSITE" id="PS01344">
    <property type="entry name" value="FRATAXIN_1"/>
    <property type="match status" value="1"/>
</dbReference>
<dbReference type="PROSITE" id="PS50810">
    <property type="entry name" value="FRATAXIN_2"/>
    <property type="match status" value="1"/>
</dbReference>
<proteinExistence type="inferred from homology"/>
<comment type="function">
    <text evidence="1">Involved in iron-sulfur (Fe-S) cluster assembly. May act as a regulator of Fe-S biogenesis.</text>
</comment>
<comment type="similarity">
    <text evidence="1">Belongs to the frataxin family.</text>
</comment>
<organism>
    <name type="scientific">Escherichia coli O8 (strain IAI1)</name>
    <dbReference type="NCBI Taxonomy" id="585034"/>
    <lineage>
        <taxon>Bacteria</taxon>
        <taxon>Pseudomonadati</taxon>
        <taxon>Pseudomonadota</taxon>
        <taxon>Gammaproteobacteria</taxon>
        <taxon>Enterobacterales</taxon>
        <taxon>Enterobacteriaceae</taxon>
        <taxon>Escherichia</taxon>
    </lineage>
</organism>
<reference key="1">
    <citation type="journal article" date="2009" name="PLoS Genet.">
        <title>Organised genome dynamics in the Escherichia coli species results in highly diverse adaptive paths.</title>
        <authorList>
            <person name="Touchon M."/>
            <person name="Hoede C."/>
            <person name="Tenaillon O."/>
            <person name="Barbe V."/>
            <person name="Baeriswyl S."/>
            <person name="Bidet P."/>
            <person name="Bingen E."/>
            <person name="Bonacorsi S."/>
            <person name="Bouchier C."/>
            <person name="Bouvet O."/>
            <person name="Calteau A."/>
            <person name="Chiapello H."/>
            <person name="Clermont O."/>
            <person name="Cruveiller S."/>
            <person name="Danchin A."/>
            <person name="Diard M."/>
            <person name="Dossat C."/>
            <person name="Karoui M.E."/>
            <person name="Frapy E."/>
            <person name="Garry L."/>
            <person name="Ghigo J.M."/>
            <person name="Gilles A.M."/>
            <person name="Johnson J."/>
            <person name="Le Bouguenec C."/>
            <person name="Lescat M."/>
            <person name="Mangenot S."/>
            <person name="Martinez-Jehanne V."/>
            <person name="Matic I."/>
            <person name="Nassif X."/>
            <person name="Oztas S."/>
            <person name="Petit M.A."/>
            <person name="Pichon C."/>
            <person name="Rouy Z."/>
            <person name="Ruf C.S."/>
            <person name="Schneider D."/>
            <person name="Tourret J."/>
            <person name="Vacherie B."/>
            <person name="Vallenet D."/>
            <person name="Medigue C."/>
            <person name="Rocha E.P.C."/>
            <person name="Denamur E."/>
        </authorList>
    </citation>
    <scope>NUCLEOTIDE SEQUENCE [LARGE SCALE GENOMIC DNA]</scope>
    <source>
        <strain>IAI1</strain>
    </source>
</reference>
<accession>B7M605</accession>
<sequence>MNDSEFHRLADQLWLTIEERLDDWDGDSDIDCEINGGVLTITFENGSKIIINRQEPLHQVWLATKQGGYHFDLKGDEWICDRSGETFWDLLEQAATQQAGETVSFR</sequence>
<protein>
    <recommendedName>
        <fullName evidence="1">Iron-sulfur cluster assembly protein CyaY</fullName>
    </recommendedName>
</protein>
<gene>
    <name evidence="1" type="primary">cyaY</name>
    <name type="ordered locus">ECIAI1_3994</name>
</gene>
<name>CYAY_ECO8A</name>